<comment type="function">
    <text evidence="2">Catalyzes the reversible phosphorolytic breakdown of the N-glycosidic bond in the beta-(deoxy)ribonucleoside molecules, with the formation of the corresponding free purine bases and pentose-1-phosphate.</text>
</comment>
<comment type="catalytic activity">
    <reaction evidence="2">
        <text>a purine D-ribonucleoside + phosphate = a purine nucleobase + alpha-D-ribose 1-phosphate</text>
        <dbReference type="Rhea" id="RHEA:19805"/>
        <dbReference type="ChEBI" id="CHEBI:26386"/>
        <dbReference type="ChEBI" id="CHEBI:43474"/>
        <dbReference type="ChEBI" id="CHEBI:57720"/>
        <dbReference type="ChEBI" id="CHEBI:142355"/>
        <dbReference type="EC" id="2.4.2.1"/>
    </reaction>
</comment>
<comment type="catalytic activity">
    <reaction evidence="2">
        <text>a purine 2'-deoxy-D-ribonucleoside + phosphate = a purine nucleobase + 2-deoxy-alpha-D-ribose 1-phosphate</text>
        <dbReference type="Rhea" id="RHEA:36431"/>
        <dbReference type="ChEBI" id="CHEBI:26386"/>
        <dbReference type="ChEBI" id="CHEBI:43474"/>
        <dbReference type="ChEBI" id="CHEBI:57259"/>
        <dbReference type="ChEBI" id="CHEBI:142361"/>
        <dbReference type="EC" id="2.4.2.1"/>
    </reaction>
</comment>
<comment type="subunit">
    <text evidence="2">Homohexamer; trimer of homodimers.</text>
</comment>
<comment type="similarity">
    <text evidence="2">Belongs to the PNP/UDP phosphorylase family.</text>
</comment>
<feature type="chain" id="PRO_1000069652" description="Purine nucleoside phosphorylase DeoD-type">
    <location>
        <begin position="1"/>
        <end position="239"/>
    </location>
</feature>
<feature type="active site" description="Proton donor" evidence="2">
    <location>
        <position position="205"/>
    </location>
</feature>
<feature type="binding site" evidence="1">
    <location>
        <position position="5"/>
    </location>
    <ligand>
        <name>a purine D-ribonucleoside</name>
        <dbReference type="ChEBI" id="CHEBI:142355"/>
        <note>ligand shared between dimeric partners</note>
    </ligand>
</feature>
<feature type="binding site" description="in other chain" evidence="1">
    <location>
        <position position="21"/>
    </location>
    <ligand>
        <name>phosphate</name>
        <dbReference type="ChEBI" id="CHEBI:43474"/>
        <note>ligand shared between dimeric partners</note>
    </ligand>
</feature>
<feature type="binding site" description="in other chain" evidence="1">
    <location>
        <position position="25"/>
    </location>
    <ligand>
        <name>phosphate</name>
        <dbReference type="ChEBI" id="CHEBI:43474"/>
        <note>ligand shared between dimeric partners</note>
    </ligand>
</feature>
<feature type="binding site" evidence="1">
    <location>
        <position position="44"/>
    </location>
    <ligand>
        <name>phosphate</name>
        <dbReference type="ChEBI" id="CHEBI:43474"/>
        <note>ligand shared between dimeric partners</note>
    </ligand>
</feature>
<feature type="binding site" description="in other chain" evidence="1">
    <location>
        <begin position="88"/>
        <end position="91"/>
    </location>
    <ligand>
        <name>phosphate</name>
        <dbReference type="ChEBI" id="CHEBI:43474"/>
        <note>ligand shared between dimeric partners</note>
    </ligand>
</feature>
<feature type="binding site" description="in other chain" evidence="1">
    <location>
        <begin position="180"/>
        <end position="182"/>
    </location>
    <ligand>
        <name>a purine D-ribonucleoside</name>
        <dbReference type="ChEBI" id="CHEBI:142355"/>
        <note>ligand shared between dimeric partners</note>
    </ligand>
</feature>
<feature type="binding site" description="in other chain" evidence="1">
    <location>
        <begin position="204"/>
        <end position="205"/>
    </location>
    <ligand>
        <name>a purine D-ribonucleoside</name>
        <dbReference type="ChEBI" id="CHEBI:142355"/>
        <note>ligand shared between dimeric partners</note>
    </ligand>
</feature>
<feature type="site" description="Important for catalytic activity" evidence="2">
    <location>
        <position position="218"/>
    </location>
</feature>
<keyword id="KW-0328">Glycosyltransferase</keyword>
<keyword id="KW-0808">Transferase</keyword>
<proteinExistence type="inferred from homology"/>
<accession>Q1CMY7</accession>
<accession>C4GNL3</accession>
<evidence type="ECO:0000250" key="1">
    <source>
        <dbReference type="UniProtKB" id="P50389"/>
    </source>
</evidence>
<evidence type="ECO:0000255" key="2">
    <source>
        <dbReference type="HAMAP-Rule" id="MF_01627"/>
    </source>
</evidence>
<organism>
    <name type="scientific">Yersinia pestis bv. Antiqua (strain Nepal516)</name>
    <dbReference type="NCBI Taxonomy" id="377628"/>
    <lineage>
        <taxon>Bacteria</taxon>
        <taxon>Pseudomonadati</taxon>
        <taxon>Pseudomonadota</taxon>
        <taxon>Gammaproteobacteria</taxon>
        <taxon>Enterobacterales</taxon>
        <taxon>Yersiniaceae</taxon>
        <taxon>Yersinia</taxon>
    </lineage>
</organism>
<reference key="1">
    <citation type="journal article" date="2006" name="J. Bacteriol.">
        <title>Complete genome sequence of Yersinia pestis strains Antiqua and Nepal516: evidence of gene reduction in an emerging pathogen.</title>
        <authorList>
            <person name="Chain P.S.G."/>
            <person name="Hu P."/>
            <person name="Malfatti S.A."/>
            <person name="Radnedge L."/>
            <person name="Larimer F."/>
            <person name="Vergez L.M."/>
            <person name="Worsham P."/>
            <person name="Chu M.C."/>
            <person name="Andersen G.L."/>
        </authorList>
    </citation>
    <scope>NUCLEOTIDE SEQUENCE [LARGE SCALE GENOMIC DNA]</scope>
    <source>
        <strain>Nepal516</strain>
    </source>
</reference>
<reference key="2">
    <citation type="submission" date="2009-04" db="EMBL/GenBank/DDBJ databases">
        <title>Yersinia pestis Nepal516A whole genome shotgun sequencing project.</title>
        <authorList>
            <person name="Plunkett G. III"/>
            <person name="Anderson B.D."/>
            <person name="Baumler D.J."/>
            <person name="Burland V."/>
            <person name="Cabot E.L."/>
            <person name="Glasner J.D."/>
            <person name="Mau B."/>
            <person name="Neeno-Eckwall E."/>
            <person name="Perna N.T."/>
            <person name="Munk A.C."/>
            <person name="Tapia R."/>
            <person name="Green L.D."/>
            <person name="Rogers Y.C."/>
            <person name="Detter J.C."/>
            <person name="Bruce D.C."/>
            <person name="Brettin T.S."/>
        </authorList>
    </citation>
    <scope>NUCLEOTIDE SEQUENCE [LARGE SCALE GENOMIC DNA]</scope>
    <source>
        <strain>Nepal516</strain>
    </source>
</reference>
<sequence length="239" mass="25876">MATPHINAEMGDFADVVLMPGDPLRAKFIAETFLQDVREVNNVRGMLGFTGTYKGRKISVMGHGMGIPSCSIYAKELITDFGVKKIIRVGSCGAVRTDVKLRDVVIGMGACTDSKVNRMRFKDHDYAAIADFEMTRNAVDAAKAKGVNVRVGNLFSADLFYTPDPQMFDVMEKYGILGVEMEAAGICGVAAEFGAKALTICTVSDHIRTGEQTTAAERQTTFNDMIEIALESVLLGDNA</sequence>
<protein>
    <recommendedName>
        <fullName evidence="2">Purine nucleoside phosphorylase DeoD-type</fullName>
        <shortName evidence="2">PNP</shortName>
        <ecNumber evidence="2">2.4.2.1</ecNumber>
    </recommendedName>
</protein>
<gene>
    <name evidence="2" type="primary">deoD</name>
    <name type="ordered locus">YPN_0311</name>
    <name type="ORF">YP516_0317</name>
</gene>
<dbReference type="EC" id="2.4.2.1" evidence="2"/>
<dbReference type="EMBL" id="CP000305">
    <property type="protein sequence ID" value="ABG16643.1"/>
    <property type="molecule type" value="Genomic_DNA"/>
</dbReference>
<dbReference type="EMBL" id="ACNQ01000006">
    <property type="protein sequence ID" value="EEO78095.1"/>
    <property type="molecule type" value="Genomic_DNA"/>
</dbReference>
<dbReference type="RefSeq" id="WP_002209217.1">
    <property type="nucleotide sequence ID" value="NZ_ACNQ01000006.1"/>
</dbReference>
<dbReference type="SMR" id="Q1CMY7"/>
<dbReference type="GeneID" id="57974168"/>
<dbReference type="KEGG" id="ypn:YPN_0311"/>
<dbReference type="HOGENOM" id="CLU_068457_2_0_6"/>
<dbReference type="Proteomes" id="UP000008936">
    <property type="component" value="Chromosome"/>
</dbReference>
<dbReference type="GO" id="GO:0005829">
    <property type="term" value="C:cytosol"/>
    <property type="evidence" value="ECO:0007669"/>
    <property type="project" value="TreeGrafter"/>
</dbReference>
<dbReference type="GO" id="GO:0004731">
    <property type="term" value="F:purine-nucleoside phosphorylase activity"/>
    <property type="evidence" value="ECO:0007669"/>
    <property type="project" value="UniProtKB-UniRule"/>
</dbReference>
<dbReference type="GO" id="GO:0006152">
    <property type="term" value="P:purine nucleoside catabolic process"/>
    <property type="evidence" value="ECO:0007669"/>
    <property type="project" value="TreeGrafter"/>
</dbReference>
<dbReference type="CDD" id="cd09006">
    <property type="entry name" value="PNP_EcPNPI-like"/>
    <property type="match status" value="1"/>
</dbReference>
<dbReference type="FunFam" id="3.40.50.1580:FF:000002">
    <property type="entry name" value="Purine nucleoside phosphorylase DeoD-type"/>
    <property type="match status" value="1"/>
</dbReference>
<dbReference type="Gene3D" id="3.40.50.1580">
    <property type="entry name" value="Nucleoside phosphorylase domain"/>
    <property type="match status" value="1"/>
</dbReference>
<dbReference type="HAMAP" id="MF_01627">
    <property type="entry name" value="Pur_nucleosid_phosp"/>
    <property type="match status" value="1"/>
</dbReference>
<dbReference type="InterPro" id="IPR004402">
    <property type="entry name" value="DeoD-type"/>
</dbReference>
<dbReference type="InterPro" id="IPR018016">
    <property type="entry name" value="Nucleoside_phosphorylase_CS"/>
</dbReference>
<dbReference type="InterPro" id="IPR000845">
    <property type="entry name" value="Nucleoside_phosphorylase_d"/>
</dbReference>
<dbReference type="InterPro" id="IPR035994">
    <property type="entry name" value="Nucleoside_phosphorylase_sf"/>
</dbReference>
<dbReference type="NCBIfam" id="TIGR00107">
    <property type="entry name" value="deoD"/>
    <property type="match status" value="1"/>
</dbReference>
<dbReference type="NCBIfam" id="NF004489">
    <property type="entry name" value="PRK05819.1"/>
    <property type="match status" value="1"/>
</dbReference>
<dbReference type="NCBIfam" id="NF009914">
    <property type="entry name" value="PRK13374.1"/>
    <property type="match status" value="1"/>
</dbReference>
<dbReference type="PANTHER" id="PTHR43691:SF2">
    <property type="entry name" value="PURINE NUCLEOSIDE PHOSPHORYLASE DEOD-TYPE"/>
    <property type="match status" value="1"/>
</dbReference>
<dbReference type="PANTHER" id="PTHR43691">
    <property type="entry name" value="URIDINE PHOSPHORYLASE"/>
    <property type="match status" value="1"/>
</dbReference>
<dbReference type="Pfam" id="PF01048">
    <property type="entry name" value="PNP_UDP_1"/>
    <property type="match status" value="1"/>
</dbReference>
<dbReference type="SUPFAM" id="SSF53167">
    <property type="entry name" value="Purine and uridine phosphorylases"/>
    <property type="match status" value="1"/>
</dbReference>
<dbReference type="PROSITE" id="PS01232">
    <property type="entry name" value="PNP_UDP_1"/>
    <property type="match status" value="1"/>
</dbReference>
<name>DEOD_YERPN</name>